<comment type="function">
    <text evidence="1">RNA polymerase that catalyzes the synthesis of short RNA molecules used as primers for DNA polymerase during DNA replication.</text>
</comment>
<comment type="catalytic activity">
    <reaction evidence="1">
        <text>ssDNA + n NTP = ssDNA/pppN(pN)n-1 hybrid + (n-1) diphosphate.</text>
        <dbReference type="EC" id="2.7.7.101"/>
    </reaction>
</comment>
<comment type="cofactor">
    <cofactor evidence="1">
        <name>Mg(2+)</name>
        <dbReference type="ChEBI" id="CHEBI:18420"/>
    </cofactor>
    <text evidence="1">Binds two Mg(2+) per subunit.</text>
</comment>
<comment type="subunit">
    <text evidence="1">Forms a ternary complex with MCM helicase and DNA.</text>
</comment>
<comment type="similarity">
    <text evidence="1">Belongs to the archaeal DnaG primase family.</text>
</comment>
<comment type="sequence caution" evidence="3">
    <conflict type="erroneous initiation">
        <sequence resource="EMBL-CDS" id="AAG20005"/>
    </conflict>
</comment>
<accession>Q9HP65</accession>
<proteinExistence type="inferred from homology"/>
<name>DNAG_HALSA</name>
<organism>
    <name type="scientific">Halobacterium salinarum (strain ATCC 700922 / JCM 11081 / NRC-1)</name>
    <name type="common">Halobacterium halobium</name>
    <dbReference type="NCBI Taxonomy" id="64091"/>
    <lineage>
        <taxon>Archaea</taxon>
        <taxon>Methanobacteriati</taxon>
        <taxon>Methanobacteriota</taxon>
        <taxon>Stenosarchaea group</taxon>
        <taxon>Halobacteria</taxon>
        <taxon>Halobacteriales</taxon>
        <taxon>Halobacteriaceae</taxon>
        <taxon>Halobacterium</taxon>
        <taxon>Halobacterium salinarum NRC-34001</taxon>
    </lineage>
</organism>
<sequence length="406" mass="42410">MEDTAKYLIHADFVVDGVVERSDVVGAAFGQTEGLLGDDLAIPDLQDSAKLGRIDVSVDSEGGQSFGDITIASSLDRVETATLAAALEAVERIGPCRADVEVDRIEDVRAAKRREVVDRAKELLATAFDEGAINADDILDEVRESVRVDDITDYDGYPAGPNVDSSDAVVIVEGRADVVTLLKYGIKNAVAVEGTNIPDAIAALSREKTATAFLDGDRGGDMILRELGQVGSLDFVARAPMGECVEDLSRRTVDSALRNKTPASAAAPIATTQSETAATDGSATPAPTPEPAPDTAPSPDSDGDDTEAAAPPTLAEHARAVADTETARLLDDALARIREVPAAEVVDAVADADSVPAVVVVDATITQRLLDVAAQRGVASLIGADTDEFVKQPLATRVRTLDDART</sequence>
<keyword id="KW-0235">DNA replication</keyword>
<keyword id="KW-0240">DNA-directed RNA polymerase</keyword>
<keyword id="KW-0460">Magnesium</keyword>
<keyword id="KW-0479">Metal-binding</keyword>
<keyword id="KW-0548">Nucleotidyltransferase</keyword>
<keyword id="KW-0639">Primosome</keyword>
<keyword id="KW-1185">Reference proteome</keyword>
<keyword id="KW-0804">Transcription</keyword>
<keyword id="KW-0808">Transferase</keyword>
<gene>
    <name evidence="1" type="primary">dnaG</name>
    <name type="ordered locus">VNG_1784C</name>
</gene>
<evidence type="ECO:0000255" key="1">
    <source>
        <dbReference type="HAMAP-Rule" id="MF_00007"/>
    </source>
</evidence>
<evidence type="ECO:0000256" key="2">
    <source>
        <dbReference type="SAM" id="MobiDB-lite"/>
    </source>
</evidence>
<evidence type="ECO:0000305" key="3"/>
<feature type="chain" id="PRO_0000240455" description="DNA primase DnaG">
    <location>
        <begin position="1"/>
        <end position="406"/>
    </location>
</feature>
<feature type="domain" description="Toprim" evidence="1">
    <location>
        <begin position="167"/>
        <end position="253"/>
    </location>
</feature>
<feature type="region of interest" description="Disordered" evidence="2">
    <location>
        <begin position="259"/>
        <end position="309"/>
    </location>
</feature>
<feature type="compositionally biased region" description="Low complexity" evidence="2">
    <location>
        <begin position="261"/>
        <end position="272"/>
    </location>
</feature>
<feature type="compositionally biased region" description="Pro residues" evidence="2">
    <location>
        <begin position="286"/>
        <end position="296"/>
    </location>
</feature>
<feature type="binding site" evidence="1">
    <location>
        <position position="173"/>
    </location>
    <ligand>
        <name>Mg(2+)</name>
        <dbReference type="ChEBI" id="CHEBI:18420"/>
        <label>1</label>
        <note>catalytic</note>
    </ligand>
</feature>
<feature type="binding site" evidence="1">
    <location>
        <position position="215"/>
    </location>
    <ligand>
        <name>Mg(2+)</name>
        <dbReference type="ChEBI" id="CHEBI:18420"/>
        <label>1</label>
        <note>catalytic</note>
    </ligand>
</feature>
<feature type="binding site" evidence="1">
    <location>
        <position position="215"/>
    </location>
    <ligand>
        <name>Mg(2+)</name>
        <dbReference type="ChEBI" id="CHEBI:18420"/>
        <label>2</label>
    </ligand>
</feature>
<feature type="binding site" evidence="1">
    <location>
        <position position="217"/>
    </location>
    <ligand>
        <name>Mg(2+)</name>
        <dbReference type="ChEBI" id="CHEBI:18420"/>
        <label>2</label>
    </ligand>
</feature>
<protein>
    <recommendedName>
        <fullName evidence="1">DNA primase DnaG</fullName>
        <ecNumber evidence="1">2.7.7.101</ecNumber>
    </recommendedName>
</protein>
<dbReference type="EC" id="2.7.7.101" evidence="1"/>
<dbReference type="EMBL" id="AE004437">
    <property type="protein sequence ID" value="AAG20005.1"/>
    <property type="status" value="ALT_INIT"/>
    <property type="molecule type" value="Genomic_DNA"/>
</dbReference>
<dbReference type="PIR" id="A84330">
    <property type="entry name" value="A84330"/>
</dbReference>
<dbReference type="RefSeq" id="WP_012289379.1">
    <property type="nucleotide sequence ID" value="NC_002607.1"/>
</dbReference>
<dbReference type="SMR" id="Q9HP65"/>
<dbReference type="FunCoup" id="Q9HP65">
    <property type="interactions" value="13"/>
</dbReference>
<dbReference type="STRING" id="64091.VNG_1784C"/>
<dbReference type="PaxDb" id="64091-VNG_1784C"/>
<dbReference type="GeneID" id="68694423"/>
<dbReference type="KEGG" id="hal:VNG_1784C"/>
<dbReference type="PATRIC" id="fig|64091.14.peg.1360"/>
<dbReference type="HOGENOM" id="CLU_034626_0_0_2"/>
<dbReference type="InParanoid" id="Q9HP65"/>
<dbReference type="OrthoDB" id="8643at2157"/>
<dbReference type="PhylomeDB" id="Q9HP65"/>
<dbReference type="Proteomes" id="UP000000554">
    <property type="component" value="Chromosome"/>
</dbReference>
<dbReference type="GO" id="GO:0005737">
    <property type="term" value="C:cytoplasm"/>
    <property type="evidence" value="ECO:0000318"/>
    <property type="project" value="GO_Central"/>
</dbReference>
<dbReference type="GO" id="GO:0000428">
    <property type="term" value="C:DNA-directed RNA polymerase complex"/>
    <property type="evidence" value="ECO:0007669"/>
    <property type="project" value="UniProtKB-KW"/>
</dbReference>
<dbReference type="GO" id="GO:0000178">
    <property type="term" value="C:exosome (RNase complex)"/>
    <property type="evidence" value="ECO:0007669"/>
    <property type="project" value="InterPro"/>
</dbReference>
<dbReference type="GO" id="GO:1990077">
    <property type="term" value="C:primosome complex"/>
    <property type="evidence" value="ECO:0007669"/>
    <property type="project" value="UniProtKB-KW"/>
</dbReference>
<dbReference type="GO" id="GO:0003899">
    <property type="term" value="F:DNA-directed RNA polymerase activity"/>
    <property type="evidence" value="ECO:0007669"/>
    <property type="project" value="InterPro"/>
</dbReference>
<dbReference type="GO" id="GO:0046872">
    <property type="term" value="F:metal ion binding"/>
    <property type="evidence" value="ECO:0007669"/>
    <property type="project" value="UniProtKB-KW"/>
</dbReference>
<dbReference type="GO" id="GO:0008143">
    <property type="term" value="F:poly(A) binding"/>
    <property type="evidence" value="ECO:0007669"/>
    <property type="project" value="InterPro"/>
</dbReference>
<dbReference type="GO" id="GO:0006269">
    <property type="term" value="P:DNA replication, synthesis of primer"/>
    <property type="evidence" value="ECO:0000318"/>
    <property type="project" value="GO_Central"/>
</dbReference>
<dbReference type="CDD" id="cd01029">
    <property type="entry name" value="TOPRIM_primases"/>
    <property type="match status" value="1"/>
</dbReference>
<dbReference type="Gene3D" id="3.40.1360.10">
    <property type="match status" value="1"/>
</dbReference>
<dbReference type="HAMAP" id="MF_00007">
    <property type="entry name" value="DNA_primase_DnaG_arc"/>
    <property type="match status" value="1"/>
</dbReference>
<dbReference type="InterPro" id="IPR050219">
    <property type="entry name" value="DnaG_primase"/>
</dbReference>
<dbReference type="InterPro" id="IPR020607">
    <property type="entry name" value="Primase_DnaG_arc"/>
</dbReference>
<dbReference type="InterPro" id="IPR034154">
    <property type="entry name" value="TOPRIM_DnaG/twinkle"/>
</dbReference>
<dbReference type="InterPro" id="IPR006171">
    <property type="entry name" value="TOPRIM_dom"/>
</dbReference>
<dbReference type="NCBIfam" id="NF003108">
    <property type="entry name" value="PRK04031.1-1"/>
    <property type="match status" value="1"/>
</dbReference>
<dbReference type="PANTHER" id="PTHR30313">
    <property type="entry name" value="DNA PRIMASE"/>
    <property type="match status" value="1"/>
</dbReference>
<dbReference type="PANTHER" id="PTHR30313:SF2">
    <property type="entry name" value="DNA PRIMASE"/>
    <property type="match status" value="1"/>
</dbReference>
<dbReference type="Pfam" id="PF13662">
    <property type="entry name" value="Toprim_4"/>
    <property type="match status" value="1"/>
</dbReference>
<dbReference type="SMART" id="SM00493">
    <property type="entry name" value="TOPRIM"/>
    <property type="match status" value="1"/>
</dbReference>
<dbReference type="SUPFAM" id="SSF56731">
    <property type="entry name" value="DNA primase core"/>
    <property type="match status" value="1"/>
</dbReference>
<dbReference type="PROSITE" id="PS50880">
    <property type="entry name" value="TOPRIM"/>
    <property type="match status" value="1"/>
</dbReference>
<reference key="1">
    <citation type="journal article" date="2000" name="Proc. Natl. Acad. Sci. U.S.A.">
        <title>Genome sequence of Halobacterium species NRC-1.</title>
        <authorList>
            <person name="Ng W.V."/>
            <person name="Kennedy S.P."/>
            <person name="Mahairas G.G."/>
            <person name="Berquist B."/>
            <person name="Pan M."/>
            <person name="Shukla H.D."/>
            <person name="Lasky S.R."/>
            <person name="Baliga N.S."/>
            <person name="Thorsson V."/>
            <person name="Sbrogna J."/>
            <person name="Swartzell S."/>
            <person name="Weir D."/>
            <person name="Hall J."/>
            <person name="Dahl T.A."/>
            <person name="Welti R."/>
            <person name="Goo Y.A."/>
            <person name="Leithauser B."/>
            <person name="Keller K."/>
            <person name="Cruz R."/>
            <person name="Danson M.J."/>
            <person name="Hough D.W."/>
            <person name="Maddocks D.G."/>
            <person name="Jablonski P.E."/>
            <person name="Krebs M.P."/>
            <person name="Angevine C.M."/>
            <person name="Dale H."/>
            <person name="Isenbarger T.A."/>
            <person name="Peck R.F."/>
            <person name="Pohlschroder M."/>
            <person name="Spudich J.L."/>
            <person name="Jung K.-H."/>
            <person name="Alam M."/>
            <person name="Freitas T."/>
            <person name="Hou S."/>
            <person name="Daniels C.J."/>
            <person name="Dennis P.P."/>
            <person name="Omer A.D."/>
            <person name="Ebhardt H."/>
            <person name="Lowe T.M."/>
            <person name="Liang P."/>
            <person name="Riley M."/>
            <person name="Hood L."/>
            <person name="DasSarma S."/>
        </authorList>
    </citation>
    <scope>NUCLEOTIDE SEQUENCE [LARGE SCALE GENOMIC DNA]</scope>
    <source>
        <strain>ATCC 700922 / JCM 11081 / NRC-1</strain>
    </source>
</reference>